<sequence>MATNVKKVKKLRPKNVTVGIAHIHSSHQNTIISFTDKQGNVISWASSGSIGFKGTKKKTAYAATLATAAAAQKAREHGMREVIVELKGTGQGKEAARKQIITSGLNILLTKDVTPVPHNGTRPPRKWFKRQEKR</sequence>
<reference key="1">
    <citation type="journal article" date="2004" name="J. Bacteriol.">
        <title>The genome sequence of Mycoplasma hyopneumoniae strain 232, the agent of swine mycoplasmosis.</title>
        <authorList>
            <person name="Minion F.C."/>
            <person name="Lefkowitz E.J."/>
            <person name="Madsen M.L."/>
            <person name="Cleary B.J."/>
            <person name="Swartzell S.M."/>
            <person name="Mahairas G.G."/>
        </authorList>
    </citation>
    <scope>NUCLEOTIDE SEQUENCE [LARGE SCALE GENOMIC DNA]</scope>
    <source>
        <strain>232</strain>
    </source>
</reference>
<gene>
    <name evidence="1" type="primary">rpsK</name>
    <name type="ordered locus">mhp212</name>
</gene>
<dbReference type="EMBL" id="AE017332">
    <property type="protein sequence ID" value="AAV27468.1"/>
    <property type="molecule type" value="Genomic_DNA"/>
</dbReference>
<dbReference type="RefSeq" id="WP_011206049.1">
    <property type="nucleotide sequence ID" value="NC_006360.1"/>
</dbReference>
<dbReference type="SMR" id="Q601J0"/>
<dbReference type="KEGG" id="mhy:mhp212"/>
<dbReference type="eggNOG" id="COG0100">
    <property type="taxonomic scope" value="Bacteria"/>
</dbReference>
<dbReference type="HOGENOM" id="CLU_072439_5_0_14"/>
<dbReference type="PhylomeDB" id="Q601J0"/>
<dbReference type="Proteomes" id="UP000006822">
    <property type="component" value="Chromosome"/>
</dbReference>
<dbReference type="GO" id="GO:1990904">
    <property type="term" value="C:ribonucleoprotein complex"/>
    <property type="evidence" value="ECO:0007669"/>
    <property type="project" value="UniProtKB-KW"/>
</dbReference>
<dbReference type="GO" id="GO:0005840">
    <property type="term" value="C:ribosome"/>
    <property type="evidence" value="ECO:0007669"/>
    <property type="project" value="UniProtKB-KW"/>
</dbReference>
<dbReference type="GO" id="GO:0019843">
    <property type="term" value="F:rRNA binding"/>
    <property type="evidence" value="ECO:0007669"/>
    <property type="project" value="UniProtKB-UniRule"/>
</dbReference>
<dbReference type="GO" id="GO:0003735">
    <property type="term" value="F:structural constituent of ribosome"/>
    <property type="evidence" value="ECO:0007669"/>
    <property type="project" value="InterPro"/>
</dbReference>
<dbReference type="GO" id="GO:0006412">
    <property type="term" value="P:translation"/>
    <property type="evidence" value="ECO:0007669"/>
    <property type="project" value="UniProtKB-UniRule"/>
</dbReference>
<dbReference type="Gene3D" id="3.30.420.80">
    <property type="entry name" value="Ribosomal protein S11"/>
    <property type="match status" value="1"/>
</dbReference>
<dbReference type="HAMAP" id="MF_01310">
    <property type="entry name" value="Ribosomal_uS11"/>
    <property type="match status" value="1"/>
</dbReference>
<dbReference type="InterPro" id="IPR001971">
    <property type="entry name" value="Ribosomal_uS11"/>
</dbReference>
<dbReference type="InterPro" id="IPR019981">
    <property type="entry name" value="Ribosomal_uS11_bac-type"/>
</dbReference>
<dbReference type="InterPro" id="IPR018102">
    <property type="entry name" value="Ribosomal_uS11_CS"/>
</dbReference>
<dbReference type="InterPro" id="IPR036967">
    <property type="entry name" value="Ribosomal_uS11_sf"/>
</dbReference>
<dbReference type="NCBIfam" id="NF003698">
    <property type="entry name" value="PRK05309.1"/>
    <property type="match status" value="1"/>
</dbReference>
<dbReference type="NCBIfam" id="TIGR03632">
    <property type="entry name" value="uS11_bact"/>
    <property type="match status" value="1"/>
</dbReference>
<dbReference type="PANTHER" id="PTHR11759">
    <property type="entry name" value="40S RIBOSOMAL PROTEIN S14/30S RIBOSOMAL PROTEIN S11"/>
    <property type="match status" value="1"/>
</dbReference>
<dbReference type="Pfam" id="PF00411">
    <property type="entry name" value="Ribosomal_S11"/>
    <property type="match status" value="1"/>
</dbReference>
<dbReference type="PIRSF" id="PIRSF002131">
    <property type="entry name" value="Ribosomal_S11"/>
    <property type="match status" value="1"/>
</dbReference>
<dbReference type="SUPFAM" id="SSF53137">
    <property type="entry name" value="Translational machinery components"/>
    <property type="match status" value="1"/>
</dbReference>
<dbReference type="PROSITE" id="PS00054">
    <property type="entry name" value="RIBOSOMAL_S11"/>
    <property type="match status" value="1"/>
</dbReference>
<comment type="function">
    <text evidence="1">Located on the platform of the 30S subunit, it bridges several disparate RNA helices of the 16S rRNA. Forms part of the Shine-Dalgarno cleft in the 70S ribosome.</text>
</comment>
<comment type="subunit">
    <text evidence="1">Part of the 30S ribosomal subunit. Interacts with proteins S7 and S18. Binds to IF-3.</text>
</comment>
<comment type="similarity">
    <text evidence="1">Belongs to the universal ribosomal protein uS11 family.</text>
</comment>
<feature type="chain" id="PRO_0000294802" description="Small ribosomal subunit protein uS11">
    <location>
        <begin position="1"/>
        <end position="134"/>
    </location>
</feature>
<feature type="region of interest" description="Disordered" evidence="2">
    <location>
        <begin position="114"/>
        <end position="134"/>
    </location>
</feature>
<feature type="compositionally biased region" description="Basic residues" evidence="2">
    <location>
        <begin position="123"/>
        <end position="134"/>
    </location>
</feature>
<name>RS11_MESH2</name>
<evidence type="ECO:0000255" key="1">
    <source>
        <dbReference type="HAMAP-Rule" id="MF_01310"/>
    </source>
</evidence>
<evidence type="ECO:0000256" key="2">
    <source>
        <dbReference type="SAM" id="MobiDB-lite"/>
    </source>
</evidence>
<evidence type="ECO:0000305" key="3"/>
<keyword id="KW-0687">Ribonucleoprotein</keyword>
<keyword id="KW-0689">Ribosomal protein</keyword>
<keyword id="KW-0694">RNA-binding</keyword>
<keyword id="KW-0699">rRNA-binding</keyword>
<organism>
    <name type="scientific">Mesomycoplasma hyopneumoniae (strain 232)</name>
    <name type="common">Mycoplasma hyopneumoniae</name>
    <dbReference type="NCBI Taxonomy" id="295358"/>
    <lineage>
        <taxon>Bacteria</taxon>
        <taxon>Bacillati</taxon>
        <taxon>Mycoplasmatota</taxon>
        <taxon>Mycoplasmoidales</taxon>
        <taxon>Metamycoplasmataceae</taxon>
        <taxon>Mesomycoplasma</taxon>
    </lineage>
</organism>
<protein>
    <recommendedName>
        <fullName evidence="1">Small ribosomal subunit protein uS11</fullName>
    </recommendedName>
    <alternativeName>
        <fullName evidence="3">30S ribosomal protein S11</fullName>
    </alternativeName>
</protein>
<proteinExistence type="inferred from homology"/>
<accession>Q601J0</accession>